<name>PTSS1_BOVIN</name>
<dbReference type="EC" id="2.7.8.29" evidence="1"/>
<dbReference type="EMBL" id="DAAA02039445">
    <property type="status" value="NOT_ANNOTATED_CDS"/>
    <property type="molecule type" value="Genomic_DNA"/>
</dbReference>
<dbReference type="EMBL" id="BC112833">
    <property type="protein sequence ID" value="AAI12834.1"/>
    <property type="molecule type" value="mRNA"/>
</dbReference>
<dbReference type="RefSeq" id="NP_001039505.1">
    <property type="nucleotide sequence ID" value="NM_001046040.1"/>
</dbReference>
<dbReference type="FunCoup" id="Q2KHY9">
    <property type="interactions" value="1874"/>
</dbReference>
<dbReference type="STRING" id="9913.ENSBTAP00000018461"/>
<dbReference type="PaxDb" id="9913-ENSBTAP00000018461"/>
<dbReference type="Ensembl" id="ENSBTAT00000018461.7">
    <property type="protein sequence ID" value="ENSBTAP00000018461.5"/>
    <property type="gene ID" value="ENSBTAG00000013901.7"/>
</dbReference>
<dbReference type="GeneID" id="509819"/>
<dbReference type="KEGG" id="bta:509819"/>
<dbReference type="CTD" id="9791"/>
<dbReference type="VEuPathDB" id="HostDB:ENSBTAG00000013901"/>
<dbReference type="VGNC" id="VGNC:33495">
    <property type="gene designation" value="PTDSS1"/>
</dbReference>
<dbReference type="eggNOG" id="KOG2735">
    <property type="taxonomic scope" value="Eukaryota"/>
</dbReference>
<dbReference type="GeneTree" id="ENSGT00530000063576"/>
<dbReference type="HOGENOM" id="CLU_037661_3_0_1"/>
<dbReference type="InParanoid" id="Q2KHY9"/>
<dbReference type="OMA" id="LPNFWEC"/>
<dbReference type="OrthoDB" id="10265393at2759"/>
<dbReference type="TreeFam" id="TF300012"/>
<dbReference type="Reactome" id="R-BTA-1483101">
    <property type="pathway name" value="Synthesis of PS"/>
</dbReference>
<dbReference type="UniPathway" id="UPA00948"/>
<dbReference type="Proteomes" id="UP000009136">
    <property type="component" value="Chromosome 14"/>
</dbReference>
<dbReference type="Bgee" id="ENSBTAG00000013901">
    <property type="expression patterns" value="Expressed in cardiac ventricle and 105 other cell types or tissues"/>
</dbReference>
<dbReference type="GO" id="GO:0005789">
    <property type="term" value="C:endoplasmic reticulum membrane"/>
    <property type="evidence" value="ECO:0007669"/>
    <property type="project" value="UniProtKB-SubCell"/>
</dbReference>
<dbReference type="GO" id="GO:0106258">
    <property type="term" value="F:L-serine-phosphatidylcholine phosphatidyltransferase activity"/>
    <property type="evidence" value="ECO:0007669"/>
    <property type="project" value="RHEA"/>
</dbReference>
<dbReference type="GO" id="GO:0106245">
    <property type="term" value="F:L-serine-phosphatidylethanolamine phosphatidyltransferase activity"/>
    <property type="evidence" value="ECO:0007669"/>
    <property type="project" value="UniProtKB-EC"/>
</dbReference>
<dbReference type="GO" id="GO:0006659">
    <property type="term" value="P:phosphatidylserine biosynthetic process"/>
    <property type="evidence" value="ECO:0007669"/>
    <property type="project" value="UniProtKB-UniPathway"/>
</dbReference>
<dbReference type="InterPro" id="IPR004277">
    <property type="entry name" value="PSS"/>
</dbReference>
<dbReference type="PANTHER" id="PTHR15362">
    <property type="entry name" value="PHOSPHATIDYLINOSITOL SYNTHASE"/>
    <property type="match status" value="1"/>
</dbReference>
<dbReference type="PANTHER" id="PTHR15362:SF15">
    <property type="entry name" value="PHOSPHATIDYLSERINE SYNTHASE 1"/>
    <property type="match status" value="1"/>
</dbReference>
<dbReference type="Pfam" id="PF03034">
    <property type="entry name" value="PSS"/>
    <property type="match status" value="1"/>
</dbReference>
<sequence>MASCVGSRTLSKDDVNYKMHFRMINEQQVEDITIDFFYRPHTITLLSFTIVSLMYFAFTRDDSVPEDNIWRGILSVIFFFLIISVLAFPNGPFTRPHPALWRMVFGLSVLYFLFLVFLLFLNFEQVKSLMYWLDPNLRYATREADVMEYAVNCHVITWERIISHFDIFAFGHFWGWAMKALLIRSYGLCWTISITWELTELFFMHLLPNFAECWWDQVILDILLCNGGGIWLGMVVCRFLEMRTYHWASFKDIHTTTGKIKRAVLQFTPASWTYVRWFDPKSSFQRVAGIYLFMIIWQLTELNTFFLKHIFVFQASHPLSWCRILFIGGITAPTVRQYYAYLTDTQCKRVGTQCWVFGVIGFLEAIVCIKFGQDLFSKTQILYVVLWLLCVAFTTFLCLYGMVWYAEHYGHREKTYSECEDGTYSPDISWPHGKGSKGSEDGPHKHPGNSESHSSRRRNRHSKSKVTNGVGKK</sequence>
<organism>
    <name type="scientific">Bos taurus</name>
    <name type="common">Bovine</name>
    <dbReference type="NCBI Taxonomy" id="9913"/>
    <lineage>
        <taxon>Eukaryota</taxon>
        <taxon>Metazoa</taxon>
        <taxon>Chordata</taxon>
        <taxon>Craniata</taxon>
        <taxon>Vertebrata</taxon>
        <taxon>Euteleostomi</taxon>
        <taxon>Mammalia</taxon>
        <taxon>Eutheria</taxon>
        <taxon>Laurasiatheria</taxon>
        <taxon>Artiodactyla</taxon>
        <taxon>Ruminantia</taxon>
        <taxon>Pecora</taxon>
        <taxon>Bovidae</taxon>
        <taxon>Bovinae</taxon>
        <taxon>Bos</taxon>
    </lineage>
</organism>
<protein>
    <recommendedName>
        <fullName>Phosphatidylserine synthase 1</fullName>
        <shortName>PSS-1</shortName>
        <shortName>PtdSer synthase 1</shortName>
        <ecNumber evidence="1">2.7.8.29</ecNumber>
    </recommendedName>
    <alternativeName>
        <fullName>Serine-exchange enzyme I</fullName>
    </alternativeName>
</protein>
<proteinExistence type="evidence at transcript level"/>
<comment type="function">
    <text evidence="1">Catalyzes a base-exchange reaction in which the polar head group of phosphatidylethanolamine (PE) or phosphatidylcholine (PC) is replaced by L-serine (By similarity). Catalyzes mainly the conversion of phosphatidylcholine but also converts, in vitro and to a lesser extent, phosphatidylethanolamine (By similarity).</text>
</comment>
<comment type="catalytic activity">
    <reaction evidence="1">
        <text>a 1,2-diacyl-sn-glycero-3-phosphoethanolamine + L-serine = a 1,2-diacyl-sn-glycero-3-phospho-L-serine + ethanolamine</text>
        <dbReference type="Rhea" id="RHEA:27606"/>
        <dbReference type="ChEBI" id="CHEBI:33384"/>
        <dbReference type="ChEBI" id="CHEBI:57262"/>
        <dbReference type="ChEBI" id="CHEBI:57603"/>
        <dbReference type="ChEBI" id="CHEBI:64612"/>
        <dbReference type="EC" id="2.7.8.29"/>
    </reaction>
    <physiologicalReaction direction="left-to-right" evidence="1">
        <dbReference type="Rhea" id="RHEA:27607"/>
    </physiologicalReaction>
</comment>
<comment type="catalytic activity">
    <reaction evidence="1">
        <text>a 1,2-diacyl-sn-glycero-3-phosphocholine + L-serine = a 1,2-diacyl-sn-glycero-3-phospho-L-serine + choline</text>
        <dbReference type="Rhea" id="RHEA:45088"/>
        <dbReference type="ChEBI" id="CHEBI:15354"/>
        <dbReference type="ChEBI" id="CHEBI:33384"/>
        <dbReference type="ChEBI" id="CHEBI:57262"/>
        <dbReference type="ChEBI" id="CHEBI:57643"/>
    </reaction>
    <physiologicalReaction direction="left-to-right" evidence="1">
        <dbReference type="Rhea" id="RHEA:45089"/>
    </physiologicalReaction>
</comment>
<comment type="pathway">
    <text>Phospholipid metabolism; phosphatidylserine biosynthesis.</text>
</comment>
<comment type="subcellular location">
    <subcellularLocation>
        <location evidence="2">Endoplasmic reticulum membrane</location>
        <topology evidence="2">Multi-pass membrane protein</topology>
    </subcellularLocation>
    <text evidence="2">Highly enriched in the mitochondria-associated membrane (MAM).</text>
</comment>
<comment type="similarity">
    <text evidence="5">Belongs to the phosphatidyl serine synthase family.</text>
</comment>
<accession>Q2KHY9</accession>
<accession>F1MKI4</accession>
<reference key="1">
    <citation type="journal article" date="2009" name="Genome Biol.">
        <title>A whole-genome assembly of the domestic cow, Bos taurus.</title>
        <authorList>
            <person name="Zimin A.V."/>
            <person name="Delcher A.L."/>
            <person name="Florea L."/>
            <person name="Kelley D.R."/>
            <person name="Schatz M.C."/>
            <person name="Puiu D."/>
            <person name="Hanrahan F."/>
            <person name="Pertea G."/>
            <person name="Van Tassell C.P."/>
            <person name="Sonstegard T.S."/>
            <person name="Marcais G."/>
            <person name="Roberts M."/>
            <person name="Subramanian P."/>
            <person name="Yorke J.A."/>
            <person name="Salzberg S.L."/>
        </authorList>
    </citation>
    <scope>NUCLEOTIDE SEQUENCE [LARGE SCALE GENOMIC DNA]</scope>
    <source>
        <strain>Hereford</strain>
    </source>
</reference>
<reference key="2">
    <citation type="submission" date="2006-01" db="EMBL/GenBank/DDBJ databases">
        <authorList>
            <consortium name="NIH - Mammalian Gene Collection (MGC) project"/>
        </authorList>
    </citation>
    <scope>NUCLEOTIDE SEQUENCE [LARGE SCALE MRNA]</scope>
    <source>
        <strain>Hereford</strain>
        <tissue>Heart ventricle</tissue>
    </source>
</reference>
<keyword id="KW-0007">Acetylation</keyword>
<keyword id="KW-0256">Endoplasmic reticulum</keyword>
<keyword id="KW-0444">Lipid biosynthesis</keyword>
<keyword id="KW-0443">Lipid metabolism</keyword>
<keyword id="KW-0472">Membrane</keyword>
<keyword id="KW-0594">Phospholipid biosynthesis</keyword>
<keyword id="KW-1208">Phospholipid metabolism</keyword>
<keyword id="KW-0597">Phosphoprotein</keyword>
<keyword id="KW-1185">Reference proteome</keyword>
<keyword id="KW-0808">Transferase</keyword>
<keyword id="KW-0812">Transmembrane</keyword>
<keyword id="KW-1133">Transmembrane helix</keyword>
<evidence type="ECO:0000250" key="1">
    <source>
        <dbReference type="UniProtKB" id="P48651"/>
    </source>
</evidence>
<evidence type="ECO:0000250" key="2">
    <source>
        <dbReference type="UniProtKB" id="Q99LH2"/>
    </source>
</evidence>
<evidence type="ECO:0000255" key="3"/>
<evidence type="ECO:0000256" key="4">
    <source>
        <dbReference type="SAM" id="MobiDB-lite"/>
    </source>
</evidence>
<evidence type="ECO:0000305" key="5"/>
<feature type="initiator methionine" description="Removed" evidence="1">
    <location>
        <position position="1"/>
    </location>
</feature>
<feature type="chain" id="PRO_0000416029" description="Phosphatidylserine synthase 1">
    <location>
        <begin position="2"/>
        <end position="473"/>
    </location>
</feature>
<feature type="topological domain" description="Cytoplasmic" evidence="3">
    <location>
        <begin position="2"/>
        <end position="35"/>
    </location>
</feature>
<feature type="transmembrane region" description="Helical" evidence="3">
    <location>
        <begin position="36"/>
        <end position="56"/>
    </location>
</feature>
<feature type="topological domain" description="Lumenal" evidence="3">
    <location>
        <begin position="57"/>
        <end position="72"/>
    </location>
</feature>
<feature type="transmembrane region" description="Helical" evidence="3">
    <location>
        <begin position="73"/>
        <end position="93"/>
    </location>
</feature>
<feature type="topological domain" description="Cytoplasmic" evidence="3">
    <location>
        <begin position="94"/>
        <end position="102"/>
    </location>
</feature>
<feature type="transmembrane region" description="Helical" evidence="3">
    <location>
        <begin position="103"/>
        <end position="123"/>
    </location>
</feature>
<feature type="topological domain" description="Lumenal" evidence="3">
    <location>
        <begin position="124"/>
        <end position="186"/>
    </location>
</feature>
<feature type="transmembrane region" description="Helical" evidence="3">
    <location>
        <begin position="187"/>
        <end position="207"/>
    </location>
</feature>
<feature type="topological domain" description="Cytoplasmic" evidence="3">
    <location>
        <begin position="208"/>
        <end position="216"/>
    </location>
</feature>
<feature type="transmembrane region" description="Helical" evidence="3">
    <location>
        <begin position="217"/>
        <end position="237"/>
    </location>
</feature>
<feature type="topological domain" description="Lumenal" evidence="3">
    <location>
        <begin position="238"/>
        <end position="286"/>
    </location>
</feature>
<feature type="transmembrane region" description="Helical" evidence="3">
    <location>
        <begin position="287"/>
        <end position="307"/>
    </location>
</feature>
<feature type="topological domain" description="Cytoplasmic" evidence="3">
    <location>
        <begin position="308"/>
        <end position="319"/>
    </location>
</feature>
<feature type="transmembrane region" description="Helical" evidence="3">
    <location>
        <begin position="320"/>
        <end position="342"/>
    </location>
</feature>
<feature type="topological domain" description="Lumenal" evidence="3">
    <location>
        <begin position="343"/>
        <end position="355"/>
    </location>
</feature>
<feature type="transmembrane region" description="Helical" evidence="3">
    <location>
        <begin position="356"/>
        <end position="376"/>
    </location>
</feature>
<feature type="topological domain" description="Cytoplasmic" evidence="3">
    <location>
        <begin position="377"/>
        <end position="383"/>
    </location>
</feature>
<feature type="transmembrane region" description="Helical" evidence="3">
    <location>
        <begin position="384"/>
        <end position="404"/>
    </location>
</feature>
<feature type="topological domain" description="Lumenal" evidence="3">
    <location>
        <begin position="405"/>
        <end position="473"/>
    </location>
</feature>
<feature type="region of interest" description="Disordered" evidence="4">
    <location>
        <begin position="427"/>
        <end position="473"/>
    </location>
</feature>
<feature type="compositionally biased region" description="Basic residues" evidence="4">
    <location>
        <begin position="455"/>
        <end position="464"/>
    </location>
</feature>
<feature type="modified residue" description="N-acetylalanine" evidence="1">
    <location>
        <position position="2"/>
    </location>
</feature>
<feature type="modified residue" description="Phosphoserine" evidence="1">
    <location>
        <position position="417"/>
    </location>
</feature>
<feature type="modified residue" description="Phosphoserine" evidence="1">
    <location>
        <position position="425"/>
    </location>
</feature>
<feature type="modified residue" description="Phosphoserine" evidence="1">
    <location>
        <position position="454"/>
    </location>
</feature>
<gene>
    <name type="primary">PTDSS1</name>
</gene>